<protein>
    <recommendedName>
        <fullName>Viral interleukin-8 homolog</fullName>
        <shortName>vIL8</shortName>
    </recommendedName>
</protein>
<gene>
    <name type="primary">MDV078</name>
    <name type="synonym">MDV003</name>
</gene>
<comment type="function">
    <text evidence="3">Plays a role in the early phase of cytolytic infections presumably by recruiting host B or T-lymphocytes.</text>
</comment>
<comment type="subunit">
    <text evidence="1">Homodimer.</text>
</comment>
<comment type="subcellular location">
    <subcellularLocation>
        <location evidence="4">Secreted</location>
    </subcellularLocation>
</comment>
<comment type="similarity">
    <text evidence="4">Belongs to the intercrine alpha (chemokine CxC) family.</text>
</comment>
<organismHost>
    <name type="scientific">Gallus gallus</name>
    <name type="common">Chicken</name>
    <dbReference type="NCBI Taxonomy" id="9031"/>
</organismHost>
<feature type="signal peptide" evidence="2">
    <location>
        <begin position="1"/>
        <end position="22"/>
    </location>
</feature>
<feature type="chain" id="PRO_0000406503" description="Viral interleukin-8 homolog">
    <location>
        <begin position="23"/>
        <end position="134"/>
    </location>
</feature>
<dbReference type="EMBL" id="AF243438">
    <property type="protein sequence ID" value="AAG14256.1"/>
    <property type="molecule type" value="Genomic_DNA"/>
</dbReference>
<dbReference type="EMBL" id="AF243438">
    <property type="protein sequence ID" value="AAG14290.1"/>
    <property type="molecule type" value="Genomic_DNA"/>
</dbReference>
<dbReference type="RefSeq" id="YP_001033918.1">
    <property type="nucleotide sequence ID" value="NC_002229.3"/>
</dbReference>
<dbReference type="RefSeq" id="YP_001033995.1">
    <property type="nucleotide sequence ID" value="NC_002229.3"/>
</dbReference>
<dbReference type="SMR" id="Q77MQ6"/>
<dbReference type="GeneID" id="4811462"/>
<dbReference type="GeneID" id="4811544"/>
<dbReference type="KEGG" id="vg:4811462"/>
<dbReference type="KEGG" id="vg:4811544"/>
<dbReference type="Proteomes" id="UP000008072">
    <property type="component" value="Segment"/>
</dbReference>
<dbReference type="GO" id="GO:0005576">
    <property type="term" value="C:extracellular region"/>
    <property type="evidence" value="ECO:0007669"/>
    <property type="project" value="UniProtKB-SubCell"/>
</dbReference>
<dbReference type="GO" id="GO:0008009">
    <property type="term" value="F:chemokine activity"/>
    <property type="evidence" value="ECO:0007669"/>
    <property type="project" value="InterPro"/>
</dbReference>
<dbReference type="GO" id="GO:0006952">
    <property type="term" value="P:defense response"/>
    <property type="evidence" value="ECO:0007669"/>
    <property type="project" value="InterPro"/>
</dbReference>
<dbReference type="GO" id="GO:0006955">
    <property type="term" value="P:immune response"/>
    <property type="evidence" value="ECO:0007669"/>
    <property type="project" value="InterPro"/>
</dbReference>
<dbReference type="CDD" id="cd00273">
    <property type="entry name" value="Chemokine_CXC"/>
    <property type="match status" value="1"/>
</dbReference>
<dbReference type="FunFam" id="2.40.50.40:FF:000004">
    <property type="entry name" value="C-X-C motif chemokine"/>
    <property type="match status" value="1"/>
</dbReference>
<dbReference type="Gene3D" id="2.40.50.40">
    <property type="match status" value="1"/>
</dbReference>
<dbReference type="InterPro" id="IPR039809">
    <property type="entry name" value="Chemokine_b/g/d"/>
</dbReference>
<dbReference type="InterPro" id="IPR001089">
    <property type="entry name" value="Chemokine_CXC"/>
</dbReference>
<dbReference type="InterPro" id="IPR001811">
    <property type="entry name" value="Chemokine_IL8-like_dom"/>
</dbReference>
<dbReference type="InterPro" id="IPR033899">
    <property type="entry name" value="CXC_Chemokine_domain"/>
</dbReference>
<dbReference type="InterPro" id="IPR036048">
    <property type="entry name" value="Interleukin_8-like_sf"/>
</dbReference>
<dbReference type="PANTHER" id="PTHR12015:SF198">
    <property type="entry name" value="PLATELET BASIC PROTEIN"/>
    <property type="match status" value="1"/>
</dbReference>
<dbReference type="PANTHER" id="PTHR12015">
    <property type="entry name" value="SMALL INDUCIBLE CYTOKINE A"/>
    <property type="match status" value="1"/>
</dbReference>
<dbReference type="Pfam" id="PF00048">
    <property type="entry name" value="IL8"/>
    <property type="match status" value="1"/>
</dbReference>
<dbReference type="PRINTS" id="PR00436">
    <property type="entry name" value="INTERLEUKIN8"/>
</dbReference>
<dbReference type="PRINTS" id="PR00437">
    <property type="entry name" value="SMALLCYTKCXC"/>
</dbReference>
<dbReference type="SMART" id="SM00199">
    <property type="entry name" value="SCY"/>
    <property type="match status" value="1"/>
</dbReference>
<dbReference type="SUPFAM" id="SSF54117">
    <property type="entry name" value="Interleukin 8-like chemokines"/>
    <property type="match status" value="1"/>
</dbReference>
<accession>Q77MQ6</accession>
<name>IL8H_GAHVM</name>
<evidence type="ECO:0000250" key="1"/>
<evidence type="ECO:0000255" key="2"/>
<evidence type="ECO:0000269" key="3">
    <source>
    </source>
</evidence>
<evidence type="ECO:0000305" key="4"/>
<keyword id="KW-1125">Evasion of host immunity by viral interleukin-like protein</keyword>
<keyword id="KW-0945">Host-virus interaction</keyword>
<keyword id="KW-1185">Reference proteome</keyword>
<keyword id="KW-0964">Secreted</keyword>
<keyword id="KW-0732">Signal</keyword>
<keyword id="KW-0899">Viral immunoevasion</keyword>
<sequence length="134" mass="14828">MQALLLVLVLFIVQIYLLPGNGISLESLAVDKRCKCVKVTNRPTGLGPIIAVDVIPPGIHCRRTEIIFALKKNRKVCVDPEAPWVQQFIKKLERQHRTRKENLMVGEDGGKSTVGPVKNTIEPTPPTIGSHICL</sequence>
<organism>
    <name type="scientific">Gallid herpesvirus 2 (strain Chicken/Md5/ATCC VR-987)</name>
    <name type="common">GaHV-2</name>
    <name type="synonym">Marek's disease herpesvirus type 1</name>
    <dbReference type="NCBI Taxonomy" id="10389"/>
    <lineage>
        <taxon>Viruses</taxon>
        <taxon>Duplodnaviria</taxon>
        <taxon>Heunggongvirae</taxon>
        <taxon>Peploviricota</taxon>
        <taxon>Herviviricetes</taxon>
        <taxon>Herpesvirales</taxon>
        <taxon>Orthoherpesviridae</taxon>
        <taxon>Alphaherpesvirinae</taxon>
        <taxon>Mardivirus</taxon>
        <taxon>Mardivirus gallidalpha2</taxon>
        <taxon>Gallid alphaherpesvirus 2</taxon>
    </lineage>
</organism>
<reference key="1">
    <citation type="journal article" date="2000" name="J. Virol.">
        <title>The genome of a very virulent Marek's disease virus.</title>
        <authorList>
            <person name="Tulman E.R."/>
            <person name="Afonso C.L."/>
            <person name="Lu Z."/>
            <person name="Zsak L."/>
            <person name="Rock D.L."/>
            <person name="Kutish G.F."/>
        </authorList>
    </citation>
    <scope>NUCLEOTIDE SEQUENCE [LARGE SCALE GENOMIC DNA]</scope>
</reference>
<reference key="2">
    <citation type="journal article" date="2004" name="J. Virol.">
        <title>Marek's disease virus-encoded vIL-8 gene is involved in early cytolytic infection but dispensable for establishment of latency.</title>
        <authorList>
            <person name="Cui X."/>
            <person name="Lee L.F."/>
            <person name="Reed W.M."/>
            <person name="Kung H.J."/>
            <person name="Reddy S.M."/>
        </authorList>
    </citation>
    <scope>FUNCTION</scope>
</reference>
<proteinExistence type="inferred from homology"/>